<sequence length="331" mass="36384">MTKVYYEDAVKNNALEGKTVAVIGYGSQGHAHSQNLRDNGNNVIIGIREGKSAESARNDGFDVYSVSEAADKADVIMILLPDETQGETYENEIKPNLKAGNSLVFAHGFNIHFDVINPPSDVDVFLVAPKGPGHLVRRTFVEGGAVPSLFAIYQDATGNARDTALSYAKGIGATRAGVIETTFKEETETDLFGEQAVLCGGATHLIQAGFETLVEAGYQPELAYFEVLHEMKLIVDLMYEGGMEKMRHSISNTAEYGDYVSGPRVVTADTKKAMKEVLTDIQNGNFAKSFINDNKNGFKEFHRMRKEQQGHQIEKVGAELREMMPFVKPQH</sequence>
<proteinExistence type="inferred from homology"/>
<accession>Q8Y5S0</accession>
<name>ILVC_LISMO</name>
<reference key="1">
    <citation type="journal article" date="2001" name="Science">
        <title>Comparative genomics of Listeria species.</title>
        <authorList>
            <person name="Glaser P."/>
            <person name="Frangeul L."/>
            <person name="Buchrieser C."/>
            <person name="Rusniok C."/>
            <person name="Amend A."/>
            <person name="Baquero F."/>
            <person name="Berche P."/>
            <person name="Bloecker H."/>
            <person name="Brandt P."/>
            <person name="Chakraborty T."/>
            <person name="Charbit A."/>
            <person name="Chetouani F."/>
            <person name="Couve E."/>
            <person name="de Daruvar A."/>
            <person name="Dehoux P."/>
            <person name="Domann E."/>
            <person name="Dominguez-Bernal G."/>
            <person name="Duchaud E."/>
            <person name="Durant L."/>
            <person name="Dussurget O."/>
            <person name="Entian K.-D."/>
            <person name="Fsihi H."/>
            <person name="Garcia-del Portillo F."/>
            <person name="Garrido P."/>
            <person name="Gautier L."/>
            <person name="Goebel W."/>
            <person name="Gomez-Lopez N."/>
            <person name="Hain T."/>
            <person name="Hauf J."/>
            <person name="Jackson D."/>
            <person name="Jones L.-M."/>
            <person name="Kaerst U."/>
            <person name="Kreft J."/>
            <person name="Kuhn M."/>
            <person name="Kunst F."/>
            <person name="Kurapkat G."/>
            <person name="Madueno E."/>
            <person name="Maitournam A."/>
            <person name="Mata Vicente J."/>
            <person name="Ng E."/>
            <person name="Nedjari H."/>
            <person name="Nordsiek G."/>
            <person name="Novella S."/>
            <person name="de Pablos B."/>
            <person name="Perez-Diaz J.-C."/>
            <person name="Purcell R."/>
            <person name="Remmel B."/>
            <person name="Rose M."/>
            <person name="Schlueter T."/>
            <person name="Simoes N."/>
            <person name="Tierrez A."/>
            <person name="Vazquez-Boland J.-A."/>
            <person name="Voss H."/>
            <person name="Wehland J."/>
            <person name="Cossart P."/>
        </authorList>
    </citation>
    <scope>NUCLEOTIDE SEQUENCE [LARGE SCALE GENOMIC DNA]</scope>
    <source>
        <strain>ATCC BAA-679 / EGD-e</strain>
    </source>
</reference>
<organism>
    <name type="scientific">Listeria monocytogenes serovar 1/2a (strain ATCC BAA-679 / EGD-e)</name>
    <dbReference type="NCBI Taxonomy" id="169963"/>
    <lineage>
        <taxon>Bacteria</taxon>
        <taxon>Bacillati</taxon>
        <taxon>Bacillota</taxon>
        <taxon>Bacilli</taxon>
        <taxon>Bacillales</taxon>
        <taxon>Listeriaceae</taxon>
        <taxon>Listeria</taxon>
    </lineage>
</organism>
<gene>
    <name evidence="1" type="primary">ilvC</name>
    <name type="ordered locus">lmo1986</name>
</gene>
<protein>
    <recommendedName>
        <fullName evidence="1">Ketol-acid reductoisomerase (NADP(+))</fullName>
        <shortName evidence="1">KARI</shortName>
        <ecNumber evidence="1">1.1.1.86</ecNumber>
    </recommendedName>
    <alternativeName>
        <fullName evidence="1">Acetohydroxy-acid isomeroreductase</fullName>
        <shortName evidence="1">AHIR</shortName>
    </alternativeName>
    <alternativeName>
        <fullName evidence="1">Alpha-keto-beta-hydroxylacyl reductoisomerase</fullName>
    </alternativeName>
    <alternativeName>
        <fullName evidence="1">Ketol-acid reductoisomerase type 1</fullName>
    </alternativeName>
    <alternativeName>
        <fullName evidence="1">Ketol-acid reductoisomerase type I</fullName>
    </alternativeName>
</protein>
<evidence type="ECO:0000255" key="1">
    <source>
        <dbReference type="HAMAP-Rule" id="MF_00435"/>
    </source>
</evidence>
<evidence type="ECO:0000255" key="2">
    <source>
        <dbReference type="PROSITE-ProRule" id="PRU01197"/>
    </source>
</evidence>
<evidence type="ECO:0000255" key="3">
    <source>
        <dbReference type="PROSITE-ProRule" id="PRU01198"/>
    </source>
</evidence>
<feature type="chain" id="PRO_0000151325" description="Ketol-acid reductoisomerase (NADP(+))">
    <location>
        <begin position="1"/>
        <end position="331"/>
    </location>
</feature>
<feature type="domain" description="KARI N-terminal Rossmann" evidence="2">
    <location>
        <begin position="2"/>
        <end position="181"/>
    </location>
</feature>
<feature type="domain" description="KARI C-terminal knotted" evidence="3">
    <location>
        <begin position="182"/>
        <end position="327"/>
    </location>
</feature>
<feature type="active site" evidence="1">
    <location>
        <position position="107"/>
    </location>
</feature>
<feature type="binding site" evidence="1">
    <location>
        <begin position="25"/>
        <end position="28"/>
    </location>
    <ligand>
        <name>NADP(+)</name>
        <dbReference type="ChEBI" id="CHEBI:58349"/>
    </ligand>
</feature>
<feature type="binding site" evidence="1">
    <location>
        <position position="48"/>
    </location>
    <ligand>
        <name>NADP(+)</name>
        <dbReference type="ChEBI" id="CHEBI:58349"/>
    </ligand>
</feature>
<feature type="binding site" evidence="1">
    <location>
        <position position="52"/>
    </location>
    <ligand>
        <name>NADP(+)</name>
        <dbReference type="ChEBI" id="CHEBI:58349"/>
    </ligand>
</feature>
<feature type="binding site" evidence="1">
    <location>
        <begin position="82"/>
        <end position="85"/>
    </location>
    <ligand>
        <name>NADP(+)</name>
        <dbReference type="ChEBI" id="CHEBI:58349"/>
    </ligand>
</feature>
<feature type="binding site" evidence="1">
    <location>
        <position position="133"/>
    </location>
    <ligand>
        <name>NADP(+)</name>
        <dbReference type="ChEBI" id="CHEBI:58349"/>
    </ligand>
</feature>
<feature type="binding site" evidence="1">
    <location>
        <position position="190"/>
    </location>
    <ligand>
        <name>Mg(2+)</name>
        <dbReference type="ChEBI" id="CHEBI:18420"/>
        <label>1</label>
    </ligand>
</feature>
<feature type="binding site" evidence="1">
    <location>
        <position position="190"/>
    </location>
    <ligand>
        <name>Mg(2+)</name>
        <dbReference type="ChEBI" id="CHEBI:18420"/>
        <label>2</label>
    </ligand>
</feature>
<feature type="binding site" evidence="1">
    <location>
        <position position="194"/>
    </location>
    <ligand>
        <name>Mg(2+)</name>
        <dbReference type="ChEBI" id="CHEBI:18420"/>
        <label>1</label>
    </ligand>
</feature>
<feature type="binding site" evidence="1">
    <location>
        <position position="226"/>
    </location>
    <ligand>
        <name>Mg(2+)</name>
        <dbReference type="ChEBI" id="CHEBI:18420"/>
        <label>2</label>
    </ligand>
</feature>
<feature type="binding site" evidence="1">
    <location>
        <position position="230"/>
    </location>
    <ligand>
        <name>Mg(2+)</name>
        <dbReference type="ChEBI" id="CHEBI:18420"/>
        <label>2</label>
    </ligand>
</feature>
<feature type="binding site" evidence="1">
    <location>
        <position position="251"/>
    </location>
    <ligand>
        <name>substrate</name>
    </ligand>
</feature>
<dbReference type="EC" id="1.1.1.86" evidence="1"/>
<dbReference type="EMBL" id="AL591981">
    <property type="protein sequence ID" value="CAD00064.1"/>
    <property type="molecule type" value="Genomic_DNA"/>
</dbReference>
<dbReference type="PIR" id="AB1323">
    <property type="entry name" value="AB1323"/>
</dbReference>
<dbReference type="RefSeq" id="NP_465510.1">
    <property type="nucleotide sequence ID" value="NC_003210.1"/>
</dbReference>
<dbReference type="RefSeq" id="WP_009931317.1">
    <property type="nucleotide sequence ID" value="NZ_CP149495.1"/>
</dbReference>
<dbReference type="SMR" id="Q8Y5S0"/>
<dbReference type="STRING" id="169963.gene:17594671"/>
<dbReference type="PaxDb" id="169963-lmo1986"/>
<dbReference type="EnsemblBacteria" id="CAD00064">
    <property type="protein sequence ID" value="CAD00064"/>
    <property type="gene ID" value="CAD00064"/>
</dbReference>
<dbReference type="GeneID" id="93239894"/>
<dbReference type="GeneID" id="986504"/>
<dbReference type="KEGG" id="lmo:lmo1986"/>
<dbReference type="PATRIC" id="fig|169963.11.peg.2033"/>
<dbReference type="eggNOG" id="COG0059">
    <property type="taxonomic scope" value="Bacteria"/>
</dbReference>
<dbReference type="HOGENOM" id="CLU_033821_0_1_9"/>
<dbReference type="OrthoDB" id="9804088at2"/>
<dbReference type="PhylomeDB" id="Q8Y5S0"/>
<dbReference type="BioCyc" id="LMON169963:LMO1986-MONOMER"/>
<dbReference type="UniPathway" id="UPA00047">
    <property type="reaction ID" value="UER00056"/>
</dbReference>
<dbReference type="UniPathway" id="UPA00049">
    <property type="reaction ID" value="UER00060"/>
</dbReference>
<dbReference type="Proteomes" id="UP000000817">
    <property type="component" value="Chromosome"/>
</dbReference>
<dbReference type="GO" id="GO:0005829">
    <property type="term" value="C:cytosol"/>
    <property type="evidence" value="ECO:0000318"/>
    <property type="project" value="GO_Central"/>
</dbReference>
<dbReference type="GO" id="GO:0004455">
    <property type="term" value="F:ketol-acid reductoisomerase activity"/>
    <property type="evidence" value="ECO:0000318"/>
    <property type="project" value="GO_Central"/>
</dbReference>
<dbReference type="GO" id="GO:0000287">
    <property type="term" value="F:magnesium ion binding"/>
    <property type="evidence" value="ECO:0007669"/>
    <property type="project" value="UniProtKB-UniRule"/>
</dbReference>
<dbReference type="GO" id="GO:0050661">
    <property type="term" value="F:NADP binding"/>
    <property type="evidence" value="ECO:0007669"/>
    <property type="project" value="InterPro"/>
</dbReference>
<dbReference type="GO" id="GO:0009097">
    <property type="term" value="P:isoleucine biosynthetic process"/>
    <property type="evidence" value="ECO:0000318"/>
    <property type="project" value="GO_Central"/>
</dbReference>
<dbReference type="GO" id="GO:0009099">
    <property type="term" value="P:L-valine biosynthetic process"/>
    <property type="evidence" value="ECO:0000318"/>
    <property type="project" value="GO_Central"/>
</dbReference>
<dbReference type="FunFam" id="3.40.50.720:FF:000023">
    <property type="entry name" value="Ketol-acid reductoisomerase (NADP(+))"/>
    <property type="match status" value="1"/>
</dbReference>
<dbReference type="Gene3D" id="6.10.240.10">
    <property type="match status" value="1"/>
</dbReference>
<dbReference type="Gene3D" id="3.40.50.720">
    <property type="entry name" value="NAD(P)-binding Rossmann-like Domain"/>
    <property type="match status" value="1"/>
</dbReference>
<dbReference type="HAMAP" id="MF_00435">
    <property type="entry name" value="IlvC"/>
    <property type="match status" value="1"/>
</dbReference>
<dbReference type="InterPro" id="IPR008927">
    <property type="entry name" value="6-PGluconate_DH-like_C_sf"/>
</dbReference>
<dbReference type="InterPro" id="IPR013023">
    <property type="entry name" value="KARI"/>
</dbReference>
<dbReference type="InterPro" id="IPR000506">
    <property type="entry name" value="KARI_C"/>
</dbReference>
<dbReference type="InterPro" id="IPR013116">
    <property type="entry name" value="KARI_N"/>
</dbReference>
<dbReference type="InterPro" id="IPR014359">
    <property type="entry name" value="KARI_prok"/>
</dbReference>
<dbReference type="InterPro" id="IPR036291">
    <property type="entry name" value="NAD(P)-bd_dom_sf"/>
</dbReference>
<dbReference type="NCBIfam" id="TIGR00465">
    <property type="entry name" value="ilvC"/>
    <property type="match status" value="1"/>
</dbReference>
<dbReference type="NCBIfam" id="NF004017">
    <property type="entry name" value="PRK05479.1"/>
    <property type="match status" value="1"/>
</dbReference>
<dbReference type="NCBIfam" id="NF009940">
    <property type="entry name" value="PRK13403.1"/>
    <property type="match status" value="1"/>
</dbReference>
<dbReference type="PANTHER" id="PTHR21371">
    <property type="entry name" value="KETOL-ACID REDUCTOISOMERASE, MITOCHONDRIAL"/>
    <property type="match status" value="1"/>
</dbReference>
<dbReference type="PANTHER" id="PTHR21371:SF1">
    <property type="entry name" value="KETOL-ACID REDUCTOISOMERASE, MITOCHONDRIAL"/>
    <property type="match status" value="1"/>
</dbReference>
<dbReference type="Pfam" id="PF01450">
    <property type="entry name" value="KARI_C"/>
    <property type="match status" value="1"/>
</dbReference>
<dbReference type="Pfam" id="PF07991">
    <property type="entry name" value="KARI_N"/>
    <property type="match status" value="1"/>
</dbReference>
<dbReference type="PIRSF" id="PIRSF000116">
    <property type="entry name" value="IlvC_gammaproteo"/>
    <property type="match status" value="1"/>
</dbReference>
<dbReference type="SUPFAM" id="SSF48179">
    <property type="entry name" value="6-phosphogluconate dehydrogenase C-terminal domain-like"/>
    <property type="match status" value="1"/>
</dbReference>
<dbReference type="SUPFAM" id="SSF51735">
    <property type="entry name" value="NAD(P)-binding Rossmann-fold domains"/>
    <property type="match status" value="1"/>
</dbReference>
<dbReference type="PROSITE" id="PS51851">
    <property type="entry name" value="KARI_C"/>
    <property type="match status" value="1"/>
</dbReference>
<dbReference type="PROSITE" id="PS51850">
    <property type="entry name" value="KARI_N"/>
    <property type="match status" value="1"/>
</dbReference>
<comment type="function">
    <text evidence="1">Involved in the biosynthesis of branched-chain amino acids (BCAA). Catalyzes an alkyl-migration followed by a ketol-acid reduction of (S)-2-acetolactate (S2AL) to yield (R)-2,3-dihydroxy-isovalerate. In the isomerase reaction, S2AL is rearranged via a Mg-dependent methyl migration to produce 3-hydroxy-3-methyl-2-ketobutyrate (HMKB). In the reductase reaction, this 2-ketoacid undergoes a metal-dependent reduction by NADPH to yield (R)-2,3-dihydroxy-isovalerate.</text>
</comment>
<comment type="catalytic activity">
    <reaction evidence="1">
        <text>(2R)-2,3-dihydroxy-3-methylbutanoate + NADP(+) = (2S)-2-acetolactate + NADPH + H(+)</text>
        <dbReference type="Rhea" id="RHEA:22068"/>
        <dbReference type="ChEBI" id="CHEBI:15378"/>
        <dbReference type="ChEBI" id="CHEBI:49072"/>
        <dbReference type="ChEBI" id="CHEBI:57783"/>
        <dbReference type="ChEBI" id="CHEBI:58349"/>
        <dbReference type="ChEBI" id="CHEBI:58476"/>
        <dbReference type="EC" id="1.1.1.86"/>
    </reaction>
</comment>
<comment type="catalytic activity">
    <reaction evidence="1">
        <text>(2R,3R)-2,3-dihydroxy-3-methylpentanoate + NADP(+) = (S)-2-ethyl-2-hydroxy-3-oxobutanoate + NADPH + H(+)</text>
        <dbReference type="Rhea" id="RHEA:13493"/>
        <dbReference type="ChEBI" id="CHEBI:15378"/>
        <dbReference type="ChEBI" id="CHEBI:49256"/>
        <dbReference type="ChEBI" id="CHEBI:49258"/>
        <dbReference type="ChEBI" id="CHEBI:57783"/>
        <dbReference type="ChEBI" id="CHEBI:58349"/>
        <dbReference type="EC" id="1.1.1.86"/>
    </reaction>
</comment>
<comment type="cofactor">
    <cofactor evidence="1">
        <name>Mg(2+)</name>
        <dbReference type="ChEBI" id="CHEBI:18420"/>
    </cofactor>
    <text evidence="1">Binds 2 magnesium ions per subunit.</text>
</comment>
<comment type="pathway">
    <text evidence="1">Amino-acid biosynthesis; L-isoleucine biosynthesis; L-isoleucine from 2-oxobutanoate: step 2/4.</text>
</comment>
<comment type="pathway">
    <text evidence="1">Amino-acid biosynthesis; L-valine biosynthesis; L-valine from pyruvate: step 2/4.</text>
</comment>
<comment type="similarity">
    <text evidence="1">Belongs to the ketol-acid reductoisomerase family.</text>
</comment>
<keyword id="KW-0028">Amino-acid biosynthesis</keyword>
<keyword id="KW-0100">Branched-chain amino acid biosynthesis</keyword>
<keyword id="KW-0460">Magnesium</keyword>
<keyword id="KW-0479">Metal-binding</keyword>
<keyword id="KW-0521">NADP</keyword>
<keyword id="KW-0560">Oxidoreductase</keyword>
<keyword id="KW-1185">Reference proteome</keyword>